<feature type="chain" id="PRO_0000385375" description="Putative helicase 22">
    <location>
        <begin position="1"/>
        <end position="559"/>
    </location>
</feature>
<feature type="domain" description="Helicase ATP-binding" evidence="1">
    <location>
        <begin position="186"/>
        <end position="347"/>
    </location>
</feature>
<feature type="domain" description="Helicase C-terminal" evidence="2">
    <location>
        <begin position="410"/>
        <end position="552"/>
    </location>
</feature>
<feature type="short sequence motif" description="DEAH box">
    <location>
        <begin position="300"/>
        <end position="303"/>
    </location>
</feature>
<feature type="binding site" evidence="1">
    <location>
        <begin position="199"/>
        <end position="206"/>
    </location>
    <ligand>
        <name>ATP</name>
        <dbReference type="ChEBI" id="CHEBI:30616"/>
    </ligand>
</feature>
<reference key="1">
    <citation type="journal article" date="2000" name="Virology">
        <title>A novel lipothrixvirus, SIFV, of the extremely thermophilic crenarchaeon Sulfolobus.</title>
        <authorList>
            <person name="Arnold H.P."/>
            <person name="Zillig W."/>
            <person name="Ziese U."/>
            <person name="Holz I."/>
            <person name="Crosby M."/>
            <person name="Utterback T."/>
            <person name="Weidmann J.F."/>
            <person name="Umayam L.A."/>
            <person name="Teffera K."/>
            <person name="Kristjanson J.K."/>
            <person name="Klenk H.P."/>
            <person name="Nelson K.E."/>
            <person name="Fraser C.M."/>
        </authorList>
    </citation>
    <scope>NUCLEOTIDE SEQUENCE [GENOMIC DNA]</scope>
</reference>
<proteinExistence type="predicted"/>
<accession>Q914K8</accession>
<evidence type="ECO:0000255" key="1">
    <source>
        <dbReference type="PROSITE-ProRule" id="PRU00541"/>
    </source>
</evidence>
<evidence type="ECO:0000255" key="2">
    <source>
        <dbReference type="PROSITE-ProRule" id="PRU00542"/>
    </source>
</evidence>
<keyword id="KW-0067">ATP-binding</keyword>
<keyword id="KW-0347">Helicase</keyword>
<keyword id="KW-0378">Hydrolase</keyword>
<keyword id="KW-0547">Nucleotide-binding</keyword>
<keyword id="KW-1185">Reference proteome</keyword>
<dbReference type="EC" id="3.6.4.-"/>
<dbReference type="EMBL" id="AF440571">
    <property type="protein sequence ID" value="AAL27733.1"/>
    <property type="molecule type" value="Genomic_DNA"/>
</dbReference>
<dbReference type="RefSeq" id="NP_445687.1">
    <property type="nucleotide sequence ID" value="NC_003214.2"/>
</dbReference>
<dbReference type="SMR" id="Q914K8"/>
<dbReference type="GeneID" id="922314"/>
<dbReference type="KEGG" id="vg:922314"/>
<dbReference type="Proteomes" id="UP000007017">
    <property type="component" value="Segment"/>
</dbReference>
<dbReference type="GO" id="GO:0005524">
    <property type="term" value="F:ATP binding"/>
    <property type="evidence" value="ECO:0007669"/>
    <property type="project" value="UniProtKB-KW"/>
</dbReference>
<dbReference type="GO" id="GO:0003677">
    <property type="term" value="F:DNA binding"/>
    <property type="evidence" value="ECO:0007669"/>
    <property type="project" value="InterPro"/>
</dbReference>
<dbReference type="GO" id="GO:0004386">
    <property type="term" value="F:helicase activity"/>
    <property type="evidence" value="ECO:0007669"/>
    <property type="project" value="UniProtKB-KW"/>
</dbReference>
<dbReference type="GO" id="GO:0016787">
    <property type="term" value="F:hydrolase activity"/>
    <property type="evidence" value="ECO:0007669"/>
    <property type="project" value="UniProtKB-KW"/>
</dbReference>
<dbReference type="Gene3D" id="3.40.50.300">
    <property type="entry name" value="P-loop containing nucleotide triphosphate hydrolases"/>
    <property type="match status" value="2"/>
</dbReference>
<dbReference type="InterPro" id="IPR050615">
    <property type="entry name" value="ATP-dep_DNA_Helicase"/>
</dbReference>
<dbReference type="InterPro" id="IPR006935">
    <property type="entry name" value="Helicase/UvrB_N"/>
</dbReference>
<dbReference type="InterPro" id="IPR014001">
    <property type="entry name" value="Helicase_ATP-bd"/>
</dbReference>
<dbReference type="InterPro" id="IPR001650">
    <property type="entry name" value="Helicase_C-like"/>
</dbReference>
<dbReference type="InterPro" id="IPR027417">
    <property type="entry name" value="P-loop_NTPase"/>
</dbReference>
<dbReference type="PANTHER" id="PTHR11274:SF0">
    <property type="entry name" value="GENERAL TRANSCRIPTION AND DNA REPAIR FACTOR IIH HELICASE SUBUNIT XPB"/>
    <property type="match status" value="1"/>
</dbReference>
<dbReference type="PANTHER" id="PTHR11274">
    <property type="entry name" value="RAD25/XP-B DNA REPAIR HELICASE"/>
    <property type="match status" value="1"/>
</dbReference>
<dbReference type="Pfam" id="PF00271">
    <property type="entry name" value="Helicase_C"/>
    <property type="match status" value="1"/>
</dbReference>
<dbReference type="Pfam" id="PF04851">
    <property type="entry name" value="ResIII"/>
    <property type="match status" value="1"/>
</dbReference>
<dbReference type="SMART" id="SM00487">
    <property type="entry name" value="DEXDc"/>
    <property type="match status" value="1"/>
</dbReference>
<dbReference type="SMART" id="SM00490">
    <property type="entry name" value="HELICc"/>
    <property type="match status" value="1"/>
</dbReference>
<dbReference type="SUPFAM" id="SSF52540">
    <property type="entry name" value="P-loop containing nucleoside triphosphate hydrolases"/>
    <property type="match status" value="1"/>
</dbReference>
<dbReference type="PROSITE" id="PS51192">
    <property type="entry name" value="HELICASE_ATP_BIND_1"/>
    <property type="match status" value="1"/>
</dbReference>
<dbReference type="PROSITE" id="PS51194">
    <property type="entry name" value="HELICASE_CTER"/>
    <property type="match status" value="1"/>
</dbReference>
<organism>
    <name type="scientific">Sulfolobus islandicus filamentous virus (isolate Iceland/Hveragerdi)</name>
    <name type="common">SIFV</name>
    <dbReference type="NCBI Taxonomy" id="654908"/>
    <lineage>
        <taxon>Viruses</taxon>
        <taxon>Adnaviria</taxon>
        <taxon>Zilligvirae</taxon>
        <taxon>Taleaviricota</taxon>
        <taxon>Tokiviricetes</taxon>
        <taxon>Ligamenvirales</taxon>
        <taxon>Lipothrixviridae</taxon>
        <taxon>Betalipothrixvirus</taxon>
        <taxon>Sulfolobus islandicus filamentous virus</taxon>
    </lineage>
</organism>
<protein>
    <recommendedName>
        <fullName>Putative helicase 22</fullName>
        <ecNumber>3.6.4.-</ecNumber>
    </recommendedName>
</protein>
<organismHost>
    <name type="scientific">Saccharolobus islandicus</name>
    <name type="common">Sulfolobus islandicus</name>
    <dbReference type="NCBI Taxonomy" id="43080"/>
</organismHost>
<sequence length="559" mass="65148">MTQNINKIYLPSPNKYLSREDFLNYTNLMREIANFDPSTKKWYINEYKISRLTKDELKGIIDQIAEYIGNSIYNILSNYIKDDNNIINAYIKGNYIYIRDNLEKYKNLLTYKIKTFDYKEGKYTEEEILLAWQKSYGFVTLRGLYWKLKNIANFDLKPFTNLRFYDIQLKNFEMRNYQINSIKSWVSDVNVIGNGIIKAPTGSGKSVIAILSALEILKNKNNAKIVYAVNSTTLLKQFQNFAKKEDLPFVLVSGEIDEIKKGERSDFIALSISYYYSKKKRNEHEKLKELVTNADLVIIDEAHHTPANIVKSLLLDSPNSIRLGLSATPIREDGKELEIMGLLGKISFTIDYTELVRNRYLVPIEYIRYIPEIPKKLKLKIQDLDDNKDPENFAKYYSSLLRSFEHSPNTNKQIISKIKQLNQYPCLVIVRRIAIAKKLAEIMRENGIIADWVSSKTKLEERMEKIEALKNEKLQVLISTSLADEGLDIPNLRLVVLLTQGKSRIKLIQRIGRVMRVSQNKRKGYILDVIYNHDLFIKQSVKKMNFIENEYNGIITIHY</sequence>
<name>Y022_SIFVH</name>
<gene>
    <name type="primary">SIFV0022</name>
</gene>